<gene>
    <name evidence="1" type="primary">lgt</name>
    <name type="ordered locus">ELI_11815</name>
</gene>
<name>LGT_ERYLH</name>
<reference key="1">
    <citation type="journal article" date="2009" name="J. Bacteriol.">
        <title>Complete genome sequence of Erythrobacter litoralis HTCC2594.</title>
        <authorList>
            <person name="Oh H.M."/>
            <person name="Giovannoni S.J."/>
            <person name="Ferriera S."/>
            <person name="Johnson J."/>
            <person name="Cho J.C."/>
        </authorList>
    </citation>
    <scope>NUCLEOTIDE SEQUENCE [LARGE SCALE GENOMIC DNA]</scope>
    <source>
        <strain>HTCC2594</strain>
    </source>
</reference>
<comment type="function">
    <text evidence="1">Catalyzes the transfer of the diacylglyceryl group from phosphatidylglycerol to the sulfhydryl group of the N-terminal cysteine of a prolipoprotein, the first step in the formation of mature lipoproteins.</text>
</comment>
<comment type="catalytic activity">
    <reaction evidence="1">
        <text>L-cysteinyl-[prolipoprotein] + a 1,2-diacyl-sn-glycero-3-phospho-(1'-sn-glycerol) = an S-1,2-diacyl-sn-glyceryl-L-cysteinyl-[prolipoprotein] + sn-glycerol 1-phosphate + H(+)</text>
        <dbReference type="Rhea" id="RHEA:56712"/>
        <dbReference type="Rhea" id="RHEA-COMP:14679"/>
        <dbReference type="Rhea" id="RHEA-COMP:14680"/>
        <dbReference type="ChEBI" id="CHEBI:15378"/>
        <dbReference type="ChEBI" id="CHEBI:29950"/>
        <dbReference type="ChEBI" id="CHEBI:57685"/>
        <dbReference type="ChEBI" id="CHEBI:64716"/>
        <dbReference type="ChEBI" id="CHEBI:140658"/>
        <dbReference type="EC" id="2.5.1.145"/>
    </reaction>
</comment>
<comment type="pathway">
    <text evidence="1">Protein modification; lipoprotein biosynthesis (diacylglyceryl transfer).</text>
</comment>
<comment type="subcellular location">
    <subcellularLocation>
        <location evidence="1">Cell inner membrane</location>
        <topology evidence="1">Multi-pass membrane protein</topology>
    </subcellularLocation>
</comment>
<comment type="similarity">
    <text evidence="1">Belongs to the Lgt family.</text>
</comment>
<accession>Q2N786</accession>
<organism>
    <name type="scientific">Erythrobacter litoralis (strain HTCC2594)</name>
    <dbReference type="NCBI Taxonomy" id="314225"/>
    <lineage>
        <taxon>Bacteria</taxon>
        <taxon>Pseudomonadati</taxon>
        <taxon>Pseudomonadota</taxon>
        <taxon>Alphaproteobacteria</taxon>
        <taxon>Sphingomonadales</taxon>
        <taxon>Erythrobacteraceae</taxon>
        <taxon>Erythrobacter/Porphyrobacter group</taxon>
        <taxon>Erythrobacter</taxon>
    </lineage>
</organism>
<sequence length="281" mass="31098">MADAASQPIYWSELGLSPGIDLGFFTLRFYSLAYIVGIVLAYWHLGKMIKAPGAPMAQSHADDLFFYCTLGVIFGGRIGYVLFYRPDLLGTLDMFKVWEGGMSFHGGVIGVVLAILFVSWRGKLNWLRVCDYIAVNVPFGMFLGRMANFVNGELYGRPTDVSWAMIFPTDPDQVARHPSQLYQAGLEGLLMMAVMLLLFWQTRARWRPGVLVGVFTIGIAGARFVNEFFRAPDAHLADVVRDTGLSQGQWLSIPMILVGLAVVVYALTRKTKGTPEKPASA</sequence>
<keyword id="KW-0997">Cell inner membrane</keyword>
<keyword id="KW-1003">Cell membrane</keyword>
<keyword id="KW-0472">Membrane</keyword>
<keyword id="KW-1185">Reference proteome</keyword>
<keyword id="KW-0808">Transferase</keyword>
<keyword id="KW-0812">Transmembrane</keyword>
<keyword id="KW-1133">Transmembrane helix</keyword>
<feature type="chain" id="PRO_1000065477" description="Phosphatidylglycerol--prolipoprotein diacylglyceryl transferase">
    <location>
        <begin position="1"/>
        <end position="281"/>
    </location>
</feature>
<feature type="transmembrane region" description="Helical" evidence="1">
    <location>
        <begin position="29"/>
        <end position="49"/>
    </location>
</feature>
<feature type="transmembrane region" description="Helical" evidence="1">
    <location>
        <begin position="64"/>
        <end position="84"/>
    </location>
</feature>
<feature type="transmembrane region" description="Helical" evidence="1">
    <location>
        <begin position="100"/>
        <end position="120"/>
    </location>
</feature>
<feature type="transmembrane region" description="Helical" evidence="1">
    <location>
        <begin position="124"/>
        <end position="144"/>
    </location>
</feature>
<feature type="transmembrane region" description="Helical" evidence="1">
    <location>
        <begin position="180"/>
        <end position="200"/>
    </location>
</feature>
<feature type="transmembrane region" description="Helical" evidence="1">
    <location>
        <begin position="209"/>
        <end position="229"/>
    </location>
</feature>
<feature type="transmembrane region" description="Helical" evidence="1">
    <location>
        <begin position="248"/>
        <end position="268"/>
    </location>
</feature>
<feature type="binding site" evidence="1">
    <location>
        <position position="145"/>
    </location>
    <ligand>
        <name>a 1,2-diacyl-sn-glycero-3-phospho-(1'-sn-glycerol)</name>
        <dbReference type="ChEBI" id="CHEBI:64716"/>
    </ligand>
</feature>
<proteinExistence type="inferred from homology"/>
<dbReference type="EC" id="2.5.1.145" evidence="1"/>
<dbReference type="EMBL" id="CP000157">
    <property type="protein sequence ID" value="ABC64455.1"/>
    <property type="molecule type" value="Genomic_DNA"/>
</dbReference>
<dbReference type="SMR" id="Q2N786"/>
<dbReference type="STRING" id="314225.ELI_11815"/>
<dbReference type="KEGG" id="eli:ELI_11815"/>
<dbReference type="eggNOG" id="COG0682">
    <property type="taxonomic scope" value="Bacteria"/>
</dbReference>
<dbReference type="HOGENOM" id="CLU_013386_1_0_5"/>
<dbReference type="UniPathway" id="UPA00664"/>
<dbReference type="Proteomes" id="UP000008808">
    <property type="component" value="Chromosome"/>
</dbReference>
<dbReference type="GO" id="GO:0005886">
    <property type="term" value="C:plasma membrane"/>
    <property type="evidence" value="ECO:0007669"/>
    <property type="project" value="UniProtKB-SubCell"/>
</dbReference>
<dbReference type="GO" id="GO:0008961">
    <property type="term" value="F:phosphatidylglycerol-prolipoprotein diacylglyceryl transferase activity"/>
    <property type="evidence" value="ECO:0007669"/>
    <property type="project" value="UniProtKB-UniRule"/>
</dbReference>
<dbReference type="GO" id="GO:0042158">
    <property type="term" value="P:lipoprotein biosynthetic process"/>
    <property type="evidence" value="ECO:0007669"/>
    <property type="project" value="UniProtKB-UniRule"/>
</dbReference>
<dbReference type="HAMAP" id="MF_01147">
    <property type="entry name" value="Lgt"/>
    <property type="match status" value="1"/>
</dbReference>
<dbReference type="InterPro" id="IPR001640">
    <property type="entry name" value="Lgt"/>
</dbReference>
<dbReference type="NCBIfam" id="TIGR00544">
    <property type="entry name" value="lgt"/>
    <property type="match status" value="1"/>
</dbReference>
<dbReference type="PANTHER" id="PTHR30589:SF0">
    <property type="entry name" value="PHOSPHATIDYLGLYCEROL--PROLIPOPROTEIN DIACYLGLYCERYL TRANSFERASE"/>
    <property type="match status" value="1"/>
</dbReference>
<dbReference type="PANTHER" id="PTHR30589">
    <property type="entry name" value="PROLIPOPROTEIN DIACYLGLYCERYL TRANSFERASE"/>
    <property type="match status" value="1"/>
</dbReference>
<dbReference type="Pfam" id="PF01790">
    <property type="entry name" value="LGT"/>
    <property type="match status" value="1"/>
</dbReference>
<dbReference type="PROSITE" id="PS01311">
    <property type="entry name" value="LGT"/>
    <property type="match status" value="1"/>
</dbReference>
<evidence type="ECO:0000255" key="1">
    <source>
        <dbReference type="HAMAP-Rule" id="MF_01147"/>
    </source>
</evidence>
<protein>
    <recommendedName>
        <fullName evidence="1">Phosphatidylglycerol--prolipoprotein diacylglyceryl transferase</fullName>
        <ecNumber evidence="1">2.5.1.145</ecNumber>
    </recommendedName>
</protein>